<feature type="initiator methionine" description="Removed" evidence="1">
    <location>
        <position position="1"/>
    </location>
</feature>
<feature type="chain" id="PRO_0000098632" description="5-methyltetrahydropteroyltriglutamate--homocysteine methyltransferase">
    <location>
        <begin position="2"/>
        <end position="753"/>
    </location>
</feature>
<feature type="active site" description="Proton donor" evidence="2">
    <location>
        <position position="694"/>
    </location>
</feature>
<feature type="binding site" evidence="2">
    <location>
        <begin position="17"/>
        <end position="20"/>
    </location>
    <ligand>
        <name>5-methyltetrahydropteroyltri-L-glutamate</name>
        <dbReference type="ChEBI" id="CHEBI:58207"/>
    </ligand>
</feature>
<feature type="binding site" evidence="2">
    <location>
        <position position="117"/>
    </location>
    <ligand>
        <name>5-methyltetrahydropteroyltri-L-glutamate</name>
        <dbReference type="ChEBI" id="CHEBI:58207"/>
    </ligand>
</feature>
<feature type="binding site" evidence="2">
    <location>
        <begin position="431"/>
        <end position="433"/>
    </location>
    <ligand>
        <name>L-homocysteine</name>
        <dbReference type="ChEBI" id="CHEBI:58199"/>
    </ligand>
</feature>
<feature type="binding site" evidence="2">
    <location>
        <begin position="431"/>
        <end position="433"/>
    </location>
    <ligand>
        <name>L-methionine</name>
        <dbReference type="ChEBI" id="CHEBI:57844"/>
    </ligand>
</feature>
<feature type="binding site" evidence="2">
    <location>
        <position position="484"/>
    </location>
    <ligand>
        <name>L-homocysteine</name>
        <dbReference type="ChEBI" id="CHEBI:58199"/>
    </ligand>
</feature>
<feature type="binding site" evidence="2">
    <location>
        <position position="484"/>
    </location>
    <ligand>
        <name>L-methionine</name>
        <dbReference type="ChEBI" id="CHEBI:57844"/>
    </ligand>
</feature>
<feature type="binding site" evidence="2">
    <location>
        <begin position="515"/>
        <end position="516"/>
    </location>
    <ligand>
        <name>5-methyltetrahydropteroyltri-L-glutamate</name>
        <dbReference type="ChEBI" id="CHEBI:58207"/>
    </ligand>
</feature>
<feature type="binding site" evidence="2">
    <location>
        <position position="561"/>
    </location>
    <ligand>
        <name>5-methyltetrahydropteroyltri-L-glutamate</name>
        <dbReference type="ChEBI" id="CHEBI:58207"/>
    </ligand>
</feature>
<feature type="binding site" evidence="2">
    <location>
        <position position="599"/>
    </location>
    <ligand>
        <name>L-homocysteine</name>
        <dbReference type="ChEBI" id="CHEBI:58199"/>
    </ligand>
</feature>
<feature type="binding site" evidence="2">
    <location>
        <position position="599"/>
    </location>
    <ligand>
        <name>L-methionine</name>
        <dbReference type="ChEBI" id="CHEBI:57844"/>
    </ligand>
</feature>
<feature type="binding site" evidence="2">
    <location>
        <position position="605"/>
    </location>
    <ligand>
        <name>5-methyltetrahydropteroyltri-L-glutamate</name>
        <dbReference type="ChEBI" id="CHEBI:58207"/>
    </ligand>
</feature>
<feature type="binding site" evidence="2">
    <location>
        <position position="641"/>
    </location>
    <ligand>
        <name>Zn(2+)</name>
        <dbReference type="ChEBI" id="CHEBI:29105"/>
        <note>catalytic</note>
    </ligand>
</feature>
<feature type="binding site" evidence="2">
    <location>
        <position position="643"/>
    </location>
    <ligand>
        <name>Zn(2+)</name>
        <dbReference type="ChEBI" id="CHEBI:29105"/>
        <note>catalytic</note>
    </ligand>
</feature>
<feature type="binding site" evidence="2">
    <location>
        <position position="665"/>
    </location>
    <ligand>
        <name>Zn(2+)</name>
        <dbReference type="ChEBI" id="CHEBI:29105"/>
        <note>catalytic</note>
    </ligand>
</feature>
<feature type="binding site" evidence="2">
    <location>
        <position position="726"/>
    </location>
    <ligand>
        <name>Zn(2+)</name>
        <dbReference type="ChEBI" id="CHEBI:29105"/>
        <note>catalytic</note>
    </ligand>
</feature>
<protein>
    <recommendedName>
        <fullName evidence="2">5-methyltetrahydropteroyltriglutamate--homocysteine methyltransferase</fullName>
        <ecNumber evidence="2">2.1.1.14</ecNumber>
    </recommendedName>
    <alternativeName>
        <fullName evidence="2">Cobalamin-independent methionine synthase</fullName>
    </alternativeName>
    <alternativeName>
        <fullName evidence="2">Methionine synthase, vitamin-B12 independent isozyme</fullName>
    </alternativeName>
</protein>
<organism>
    <name type="scientific">Escherichia coli O157:H7</name>
    <dbReference type="NCBI Taxonomy" id="83334"/>
    <lineage>
        <taxon>Bacteria</taxon>
        <taxon>Pseudomonadati</taxon>
        <taxon>Pseudomonadota</taxon>
        <taxon>Gammaproteobacteria</taxon>
        <taxon>Enterobacterales</taxon>
        <taxon>Enterobacteriaceae</taxon>
        <taxon>Escherichia</taxon>
    </lineage>
</organism>
<evidence type="ECO:0000250" key="1"/>
<evidence type="ECO:0000255" key="2">
    <source>
        <dbReference type="HAMAP-Rule" id="MF_00172"/>
    </source>
</evidence>
<keyword id="KW-0028">Amino-acid biosynthesis</keyword>
<keyword id="KW-0479">Metal-binding</keyword>
<keyword id="KW-0486">Methionine biosynthesis</keyword>
<keyword id="KW-0489">Methyltransferase</keyword>
<keyword id="KW-1185">Reference proteome</keyword>
<keyword id="KW-0677">Repeat</keyword>
<keyword id="KW-0808">Transferase</keyword>
<keyword id="KW-0862">Zinc</keyword>
<dbReference type="EC" id="2.1.1.14" evidence="2"/>
<dbReference type="EMBL" id="AE005174">
    <property type="protein sequence ID" value="AAG59025.1"/>
    <property type="molecule type" value="Genomic_DNA"/>
</dbReference>
<dbReference type="EMBL" id="BA000007">
    <property type="protein sequence ID" value="BAB38182.1"/>
    <property type="molecule type" value="Genomic_DNA"/>
</dbReference>
<dbReference type="PIR" id="E86070">
    <property type="entry name" value="E86070"/>
</dbReference>
<dbReference type="PIR" id="G91223">
    <property type="entry name" value="G91223"/>
</dbReference>
<dbReference type="RefSeq" id="NP_312786.1">
    <property type="nucleotide sequence ID" value="NC_002695.1"/>
</dbReference>
<dbReference type="RefSeq" id="WP_000153902.1">
    <property type="nucleotide sequence ID" value="NZ_SDVX01000004.1"/>
</dbReference>
<dbReference type="SMR" id="Q8X8L5"/>
<dbReference type="STRING" id="155864.Z5351"/>
<dbReference type="GeneID" id="915145"/>
<dbReference type="KEGG" id="ece:Z5351"/>
<dbReference type="KEGG" id="ecs:ECs_4759"/>
<dbReference type="PATRIC" id="fig|386585.9.peg.4968"/>
<dbReference type="eggNOG" id="COG0620">
    <property type="taxonomic scope" value="Bacteria"/>
</dbReference>
<dbReference type="HOGENOM" id="CLU_013175_0_0_6"/>
<dbReference type="UniPathway" id="UPA00051">
    <property type="reaction ID" value="UER00082"/>
</dbReference>
<dbReference type="Proteomes" id="UP000000558">
    <property type="component" value="Chromosome"/>
</dbReference>
<dbReference type="Proteomes" id="UP000002519">
    <property type="component" value="Chromosome"/>
</dbReference>
<dbReference type="GO" id="GO:0003871">
    <property type="term" value="F:5-methyltetrahydropteroyltriglutamate-homocysteine S-methyltransferase activity"/>
    <property type="evidence" value="ECO:0007669"/>
    <property type="project" value="UniProtKB-UniRule"/>
</dbReference>
<dbReference type="GO" id="GO:0008270">
    <property type="term" value="F:zinc ion binding"/>
    <property type="evidence" value="ECO:0007669"/>
    <property type="project" value="InterPro"/>
</dbReference>
<dbReference type="GO" id="GO:0009086">
    <property type="term" value="P:methionine biosynthetic process"/>
    <property type="evidence" value="ECO:0007669"/>
    <property type="project" value="UniProtKB-UniRule"/>
</dbReference>
<dbReference type="GO" id="GO:0032259">
    <property type="term" value="P:methylation"/>
    <property type="evidence" value="ECO:0007669"/>
    <property type="project" value="UniProtKB-KW"/>
</dbReference>
<dbReference type="CDD" id="cd03311">
    <property type="entry name" value="CIMS_C_terminal_like"/>
    <property type="match status" value="1"/>
</dbReference>
<dbReference type="CDD" id="cd03312">
    <property type="entry name" value="CIMS_N_terminal_like"/>
    <property type="match status" value="1"/>
</dbReference>
<dbReference type="FunFam" id="3.20.20.210:FF:000002">
    <property type="entry name" value="5-methyltetrahydropteroyltriglutamate--homocysteine methyltransferase"/>
    <property type="match status" value="1"/>
</dbReference>
<dbReference type="FunFam" id="3.20.20.210:FF:000003">
    <property type="entry name" value="5-methyltetrahydropteroyltriglutamate--homocysteine methyltransferase"/>
    <property type="match status" value="1"/>
</dbReference>
<dbReference type="Gene3D" id="3.20.20.210">
    <property type="match status" value="2"/>
</dbReference>
<dbReference type="HAMAP" id="MF_00172">
    <property type="entry name" value="Meth_synth"/>
    <property type="match status" value="1"/>
</dbReference>
<dbReference type="InterPro" id="IPR013215">
    <property type="entry name" value="Cbl-indep_Met_Synth_N"/>
</dbReference>
<dbReference type="InterPro" id="IPR006276">
    <property type="entry name" value="Cobalamin-indep_Met_synthase"/>
</dbReference>
<dbReference type="InterPro" id="IPR002629">
    <property type="entry name" value="Met_Synth_C/arc"/>
</dbReference>
<dbReference type="InterPro" id="IPR038071">
    <property type="entry name" value="UROD/MetE-like_sf"/>
</dbReference>
<dbReference type="NCBIfam" id="TIGR01371">
    <property type="entry name" value="met_syn_B12ind"/>
    <property type="match status" value="1"/>
</dbReference>
<dbReference type="NCBIfam" id="NF003556">
    <property type="entry name" value="PRK05222.1"/>
    <property type="match status" value="1"/>
</dbReference>
<dbReference type="PANTHER" id="PTHR30519">
    <property type="entry name" value="5-METHYLTETRAHYDROPTEROYLTRIGLUTAMATE--HOMOCYSTEINE METHYLTRANSFERASE"/>
    <property type="match status" value="1"/>
</dbReference>
<dbReference type="Pfam" id="PF08267">
    <property type="entry name" value="Meth_synt_1"/>
    <property type="match status" value="1"/>
</dbReference>
<dbReference type="Pfam" id="PF01717">
    <property type="entry name" value="Meth_synt_2"/>
    <property type="match status" value="1"/>
</dbReference>
<dbReference type="PIRSF" id="PIRSF000382">
    <property type="entry name" value="MeTrfase_B12_ind"/>
    <property type="match status" value="1"/>
</dbReference>
<dbReference type="SUPFAM" id="SSF51726">
    <property type="entry name" value="UROD/MetE-like"/>
    <property type="match status" value="2"/>
</dbReference>
<sequence>MTILNHTLGFPRVGLRRELKKAQESYWAGNSTREELLAVGRELRARHWDQQKQAGIDLLPVGDFAWYDHVLTTSLLLGNVPARHQNKDGSVDIDTLFRIGRGRAPTGEPAAAAEMTKWFNTNYHYMVPEFVKGQQFKLTWTQLLDEVDEALALGHKVKPVLLGPITWLWLGKVKGEQFDRLSLLNDILPVYQQVLAELAKRGIEWVQIDEPALVLELPQAWLDAYKPAYDALQGQVKLLLTTYFEGVTPNLDTITALPVQGLHVDLVHGKDDVVELHKRLPSDWLLSAGLINGRNVWRADLTEKYVQIKDIVGKRDLWVASSCSLLHSPIDLSVETRLDAEVKSWFAFALQKCHELALLCDALNSGDTAALAEWSAPIQARRHSTRVHNPAVEKRLAAITAQDSQRANVYEVRAEAQRARFKLPAWPTTTIGSFPQTTEIRTLRLDFKKGNLDANNYRTGIAEHIRQAIVEQERLGLDVLVHGEAERNDMVEYFGEHLDGFVFTQNGWVQSYGSRCVKPPIVIGDVSRPAPITVEWAKYAQSMTDKPVKGMLTGPVTILCWSFPREDVSRETIAKQIALALRDEVADLEAAGIGIIQIDEPALREGLPLRRSDWDAYLQWGVEAFRINAAVAKDDTQIHTHMCYCEFNDIMDSIAALDADVITIETSRSDMELLESFEEFDYPNEIGPGVYDIHSPNVPSVEWIEALLKKAAKRIPAERLWVNPDCGLKTRGWPETRAALANMVQAAQNLRRG</sequence>
<proteinExistence type="inferred from homology"/>
<name>METE_ECO57</name>
<gene>
    <name evidence="2" type="primary">metE</name>
    <name type="ordered locus">Z5351</name>
    <name type="ordered locus">ECs4759</name>
</gene>
<reference key="1">
    <citation type="journal article" date="2001" name="Nature">
        <title>Genome sequence of enterohaemorrhagic Escherichia coli O157:H7.</title>
        <authorList>
            <person name="Perna N.T."/>
            <person name="Plunkett G. III"/>
            <person name="Burland V."/>
            <person name="Mau B."/>
            <person name="Glasner J.D."/>
            <person name="Rose D.J."/>
            <person name="Mayhew G.F."/>
            <person name="Evans P.S."/>
            <person name="Gregor J."/>
            <person name="Kirkpatrick H.A."/>
            <person name="Posfai G."/>
            <person name="Hackett J."/>
            <person name="Klink S."/>
            <person name="Boutin A."/>
            <person name="Shao Y."/>
            <person name="Miller L."/>
            <person name="Grotbeck E.J."/>
            <person name="Davis N.W."/>
            <person name="Lim A."/>
            <person name="Dimalanta E.T."/>
            <person name="Potamousis K."/>
            <person name="Apodaca J."/>
            <person name="Anantharaman T.S."/>
            <person name="Lin J."/>
            <person name="Yen G."/>
            <person name="Schwartz D.C."/>
            <person name="Welch R.A."/>
            <person name="Blattner F.R."/>
        </authorList>
    </citation>
    <scope>NUCLEOTIDE SEQUENCE [LARGE SCALE GENOMIC DNA]</scope>
    <source>
        <strain>O157:H7 / EDL933 / ATCC 700927 / EHEC</strain>
    </source>
</reference>
<reference key="2">
    <citation type="journal article" date="2001" name="DNA Res.">
        <title>Complete genome sequence of enterohemorrhagic Escherichia coli O157:H7 and genomic comparison with a laboratory strain K-12.</title>
        <authorList>
            <person name="Hayashi T."/>
            <person name="Makino K."/>
            <person name="Ohnishi M."/>
            <person name="Kurokawa K."/>
            <person name="Ishii K."/>
            <person name="Yokoyama K."/>
            <person name="Han C.-G."/>
            <person name="Ohtsubo E."/>
            <person name="Nakayama K."/>
            <person name="Murata T."/>
            <person name="Tanaka M."/>
            <person name="Tobe T."/>
            <person name="Iida T."/>
            <person name="Takami H."/>
            <person name="Honda T."/>
            <person name="Sasakawa C."/>
            <person name="Ogasawara N."/>
            <person name="Yasunaga T."/>
            <person name="Kuhara S."/>
            <person name="Shiba T."/>
            <person name="Hattori M."/>
            <person name="Shinagawa H."/>
        </authorList>
    </citation>
    <scope>NUCLEOTIDE SEQUENCE [LARGE SCALE GENOMIC DNA]</scope>
    <source>
        <strain>O157:H7 / Sakai / RIMD 0509952 / EHEC</strain>
    </source>
</reference>
<comment type="function">
    <text evidence="2">Catalyzes the transfer of a methyl group from 5-methyltetrahydrofolate to homocysteine resulting in methionine formation.</text>
</comment>
<comment type="catalytic activity">
    <reaction evidence="2">
        <text>5-methyltetrahydropteroyltri-L-glutamate + L-homocysteine = tetrahydropteroyltri-L-glutamate + L-methionine</text>
        <dbReference type="Rhea" id="RHEA:21196"/>
        <dbReference type="ChEBI" id="CHEBI:57844"/>
        <dbReference type="ChEBI" id="CHEBI:58140"/>
        <dbReference type="ChEBI" id="CHEBI:58199"/>
        <dbReference type="ChEBI" id="CHEBI:58207"/>
        <dbReference type="EC" id="2.1.1.14"/>
    </reaction>
</comment>
<comment type="cofactor">
    <cofactor evidence="2">
        <name>Zn(2+)</name>
        <dbReference type="ChEBI" id="CHEBI:29105"/>
    </cofactor>
    <text evidence="2">Binds 1 zinc ion per subunit.</text>
</comment>
<comment type="pathway">
    <text evidence="2">Amino-acid biosynthesis; L-methionine biosynthesis via de novo pathway; L-methionine from L-homocysteine (MetE route): step 1/1.</text>
</comment>
<comment type="similarity">
    <text evidence="2">Belongs to the vitamin-B12 independent methionine synthase family.</text>
</comment>
<accession>Q8X8L5</accession>